<dbReference type="EMBL" id="AL513382">
    <property type="protein sequence ID" value="CAD02129.1"/>
    <property type="molecule type" value="Genomic_DNA"/>
</dbReference>
<dbReference type="EMBL" id="AE014613">
    <property type="protein sequence ID" value="AAO68765.1"/>
    <property type="molecule type" value="Genomic_DNA"/>
</dbReference>
<dbReference type="RefSeq" id="NP_456284.1">
    <property type="nucleotide sequence ID" value="NC_003198.1"/>
</dbReference>
<dbReference type="RefSeq" id="WP_000150667.1">
    <property type="nucleotide sequence ID" value="NZ_WSUR01000004.1"/>
</dbReference>
<dbReference type="SMR" id="P0A238"/>
<dbReference type="STRING" id="220341.gene:17585823"/>
<dbReference type="KEGG" id="stt:t1102"/>
<dbReference type="KEGG" id="sty:STY1899"/>
<dbReference type="PATRIC" id="fig|220341.7.peg.1913"/>
<dbReference type="eggNOG" id="COG3094">
    <property type="taxonomic scope" value="Bacteria"/>
</dbReference>
<dbReference type="HOGENOM" id="CLU_123860_3_0_6"/>
<dbReference type="OMA" id="LKVFPHI"/>
<dbReference type="OrthoDB" id="5588650at2"/>
<dbReference type="Proteomes" id="UP000000541">
    <property type="component" value="Chromosome"/>
</dbReference>
<dbReference type="Proteomes" id="UP000002670">
    <property type="component" value="Chromosome"/>
</dbReference>
<dbReference type="GO" id="GO:0005886">
    <property type="term" value="C:plasma membrane"/>
    <property type="evidence" value="ECO:0007669"/>
    <property type="project" value="UniProtKB-SubCell"/>
</dbReference>
<dbReference type="InterPro" id="IPR007360">
    <property type="entry name" value="SirB"/>
</dbReference>
<dbReference type="NCBIfam" id="NF007622">
    <property type="entry name" value="PRK10278.1"/>
    <property type="match status" value="1"/>
</dbReference>
<dbReference type="PANTHER" id="PTHR39594">
    <property type="entry name" value="PROTEIN YCHQ"/>
    <property type="match status" value="1"/>
</dbReference>
<dbReference type="PANTHER" id="PTHR39594:SF1">
    <property type="entry name" value="PROTEIN YCHQ"/>
    <property type="match status" value="1"/>
</dbReference>
<dbReference type="Pfam" id="PF04247">
    <property type="entry name" value="SirB"/>
    <property type="match status" value="1"/>
</dbReference>
<dbReference type="PIRSF" id="PIRSF005610">
    <property type="entry name" value="SirB"/>
    <property type="match status" value="1"/>
</dbReference>
<proteinExistence type="inferred from homology"/>
<comment type="function">
    <text evidence="1">Required for maximal expression of sirC, not required to invade host cells.</text>
</comment>
<comment type="subcellular location">
    <subcellularLocation>
        <location evidence="2">Cell inner membrane</location>
        <topology evidence="3">Multi-pass membrane protein</topology>
    </subcellularLocation>
</comment>
<comment type="similarity">
    <text evidence="4">Belongs to the SirB2 family.</text>
</comment>
<reference key="1">
    <citation type="journal article" date="2001" name="Nature">
        <title>Complete genome sequence of a multiple drug resistant Salmonella enterica serovar Typhi CT18.</title>
        <authorList>
            <person name="Parkhill J."/>
            <person name="Dougan G."/>
            <person name="James K.D."/>
            <person name="Thomson N.R."/>
            <person name="Pickard D."/>
            <person name="Wain J."/>
            <person name="Churcher C.M."/>
            <person name="Mungall K.L."/>
            <person name="Bentley S.D."/>
            <person name="Holden M.T.G."/>
            <person name="Sebaihia M."/>
            <person name="Baker S."/>
            <person name="Basham D."/>
            <person name="Brooks K."/>
            <person name="Chillingworth T."/>
            <person name="Connerton P."/>
            <person name="Cronin A."/>
            <person name="Davis P."/>
            <person name="Davies R.M."/>
            <person name="Dowd L."/>
            <person name="White N."/>
            <person name="Farrar J."/>
            <person name="Feltwell T."/>
            <person name="Hamlin N."/>
            <person name="Haque A."/>
            <person name="Hien T.T."/>
            <person name="Holroyd S."/>
            <person name="Jagels K."/>
            <person name="Krogh A."/>
            <person name="Larsen T.S."/>
            <person name="Leather S."/>
            <person name="Moule S."/>
            <person name="O'Gaora P."/>
            <person name="Parry C."/>
            <person name="Quail M.A."/>
            <person name="Rutherford K.M."/>
            <person name="Simmonds M."/>
            <person name="Skelton J."/>
            <person name="Stevens K."/>
            <person name="Whitehead S."/>
            <person name="Barrell B.G."/>
        </authorList>
    </citation>
    <scope>NUCLEOTIDE SEQUENCE [LARGE SCALE GENOMIC DNA]</scope>
    <source>
        <strain>CT18</strain>
    </source>
</reference>
<reference key="2">
    <citation type="journal article" date="2003" name="J. Bacteriol.">
        <title>Comparative genomics of Salmonella enterica serovar Typhi strains Ty2 and CT18.</title>
        <authorList>
            <person name="Deng W."/>
            <person name="Liou S.-R."/>
            <person name="Plunkett G. III"/>
            <person name="Mayhew G.F."/>
            <person name="Rose D.J."/>
            <person name="Burland V."/>
            <person name="Kodoyianni V."/>
            <person name="Schwartz D.C."/>
            <person name="Blattner F.R."/>
        </authorList>
    </citation>
    <scope>NUCLEOTIDE SEQUENCE [LARGE SCALE GENOMIC DNA]</scope>
    <source>
        <strain>ATCC 700931 / Ty2</strain>
    </source>
</reference>
<name>SIRB2_SALTI</name>
<feature type="chain" id="PRO_0000097771" description="Protein SirB2">
    <location>
        <begin position="1"/>
        <end position="129"/>
    </location>
</feature>
<feature type="topological domain" description="Periplasmic" evidence="3">
    <location>
        <begin position="1"/>
        <end position="2"/>
    </location>
</feature>
<feature type="transmembrane region" description="Helical" evidence="3">
    <location>
        <begin position="3"/>
        <end position="23"/>
    </location>
</feature>
<feature type="topological domain" description="Cytoplasmic" evidence="3">
    <location>
        <begin position="24"/>
        <end position="41"/>
    </location>
</feature>
<feature type="transmembrane region" description="Helical" evidence="3">
    <location>
        <begin position="42"/>
        <end position="62"/>
    </location>
</feature>
<feature type="topological domain" description="Periplasmic" evidence="3">
    <location>
        <begin position="63"/>
        <end position="71"/>
    </location>
</feature>
<feature type="transmembrane region" description="Helical" evidence="3">
    <location>
        <begin position="72"/>
        <end position="92"/>
    </location>
</feature>
<feature type="topological domain" description="Cytoplasmic" evidence="3">
    <location>
        <begin position="93"/>
        <end position="104"/>
    </location>
</feature>
<feature type="transmembrane region" description="Helical" evidence="3">
    <location>
        <begin position="105"/>
        <end position="125"/>
    </location>
</feature>
<feature type="topological domain" description="Periplasmic" evidence="3">
    <location>
        <begin position="126"/>
        <end position="129"/>
    </location>
</feature>
<gene>
    <name type="primary">sirB2</name>
    <name type="ordered locus">STY1899</name>
    <name type="ordered locus">t1102</name>
</gene>
<protein>
    <recommendedName>
        <fullName>Protein SirB2</fullName>
    </recommendedName>
</protein>
<keyword id="KW-0997">Cell inner membrane</keyword>
<keyword id="KW-1003">Cell membrane</keyword>
<keyword id="KW-0472">Membrane</keyword>
<keyword id="KW-0812">Transmembrane</keyword>
<keyword id="KW-1133">Transmembrane helix</keyword>
<organism>
    <name type="scientific">Salmonella typhi</name>
    <dbReference type="NCBI Taxonomy" id="90370"/>
    <lineage>
        <taxon>Bacteria</taxon>
        <taxon>Pseudomonadati</taxon>
        <taxon>Pseudomonadota</taxon>
        <taxon>Gammaproteobacteria</taxon>
        <taxon>Enterobacterales</taxon>
        <taxon>Enterobacteriaceae</taxon>
        <taxon>Salmonella</taxon>
    </lineage>
</organism>
<accession>P0A238</accession>
<accession>Q9XCQ2</accession>
<evidence type="ECO:0000250" key="1">
    <source>
        <dbReference type="UniProtKB" id="P0A237"/>
    </source>
</evidence>
<evidence type="ECO:0000250" key="2">
    <source>
        <dbReference type="UniProtKB" id="Q46755"/>
    </source>
</evidence>
<evidence type="ECO:0000255" key="3"/>
<evidence type="ECO:0000305" key="4"/>
<sequence length="129" mass="14467">MTIAMLLTLHLICVALSVSLFVARYWWRYCGHALAAARWTRIVPPVIDTLLLLSGIGLIVKTHILPFTESGSWLTEKLFGVIIYIVLGFIALDYRQARSQQARFIAFPLALVVLYIIIKLATTKIPLLG</sequence>